<comment type="function">
    <text evidence="2">PPIases accelerate the folding of proteins. It catalyzes the cis-trans isomerization of proline imidic peptide bonds in oligopeptides.</text>
</comment>
<comment type="catalytic activity">
    <reaction evidence="2">
        <text>[protein]-peptidylproline (omega=180) = [protein]-peptidylproline (omega=0)</text>
        <dbReference type="Rhea" id="RHEA:16237"/>
        <dbReference type="Rhea" id="RHEA-COMP:10747"/>
        <dbReference type="Rhea" id="RHEA-COMP:10748"/>
        <dbReference type="ChEBI" id="CHEBI:83833"/>
        <dbReference type="ChEBI" id="CHEBI:83834"/>
        <dbReference type="EC" id="5.2.1.8"/>
    </reaction>
</comment>
<comment type="similarity">
    <text evidence="2">Belongs to the cyclophilin-type PPIase family. PPIase A subfamily.</text>
</comment>
<sequence length="21" mass="2300">ENFKIKHTEPGLLSMANAGKN</sequence>
<evidence type="ECO:0000256" key="1">
    <source>
        <dbReference type="SAM" id="MobiDB-lite"/>
    </source>
</evidence>
<evidence type="ECO:0000305" key="2"/>
<organism>
    <name type="scientific">Naegleria fowleri</name>
    <name type="common">Brain eating amoeba</name>
    <dbReference type="NCBI Taxonomy" id="5763"/>
    <lineage>
        <taxon>Eukaryota</taxon>
        <taxon>Discoba</taxon>
        <taxon>Heterolobosea</taxon>
        <taxon>Tetramitia</taxon>
        <taxon>Eutetramitia</taxon>
        <taxon>Vahlkampfiidae</taxon>
        <taxon>Naegleria</taxon>
    </lineage>
</organism>
<accession>P84342</accession>
<name>PPIA_NAEFO</name>
<reference evidence="2" key="1">
    <citation type="submission" date="2005-01" db="UniProtKB">
        <authorList>
            <person name="Omura M."/>
            <person name="Endo T."/>
            <person name="Yagita K."/>
            <person name="Izumiyama S."/>
            <person name="Furushima-Shimogawara R."/>
        </authorList>
    </citation>
    <scope>PROTEIN SEQUENCE</scope>
    <source>
        <strain>ATCC 30214 / Nf 66</strain>
    </source>
</reference>
<feature type="chain" id="PRO_0000064128" description="Peptidyl-prolyl cis-trans isomerase">
    <location>
        <begin position="1" status="less than"/>
        <end position="21" status="greater than"/>
    </location>
</feature>
<feature type="region of interest" description="Disordered" evidence="1">
    <location>
        <begin position="1"/>
        <end position="21"/>
    </location>
</feature>
<feature type="non-terminal residue">
    <location>
        <position position="1"/>
    </location>
</feature>
<feature type="non-terminal residue">
    <location>
        <position position="21"/>
    </location>
</feature>
<protein>
    <recommendedName>
        <fullName>Peptidyl-prolyl cis-trans isomerase</fullName>
        <shortName>PPIase</shortName>
        <ecNumber>5.2.1.8</ecNumber>
    </recommendedName>
    <alternativeName>
        <fullName>Cyclophilin</fullName>
    </alternativeName>
    <alternativeName>
        <fullName>NF008</fullName>
    </alternativeName>
    <alternativeName>
        <fullName>Rotamase</fullName>
    </alternativeName>
</protein>
<dbReference type="EC" id="5.2.1.8"/>
<dbReference type="GO" id="GO:0003755">
    <property type="term" value="F:peptidyl-prolyl cis-trans isomerase activity"/>
    <property type="evidence" value="ECO:0007669"/>
    <property type="project" value="UniProtKB-KW"/>
</dbReference>
<dbReference type="InterPro" id="IPR029000">
    <property type="entry name" value="Cyclophilin-like_dom_sf"/>
</dbReference>
<dbReference type="SUPFAM" id="SSF50891">
    <property type="entry name" value="Cyclophilin-like"/>
    <property type="match status" value="1"/>
</dbReference>
<keyword id="KW-0903">Direct protein sequencing</keyword>
<keyword id="KW-0413">Isomerase</keyword>
<keyword id="KW-0697">Rotamase</keyword>
<proteinExistence type="evidence at protein level"/>